<reference key="1">
    <citation type="submission" date="2009-07" db="EMBL/GenBank/DDBJ databases">
        <title>Complete sequence of Pectobacterium carotovorum subsp. carotovorum PC1.</title>
        <authorList>
            <consortium name="US DOE Joint Genome Institute"/>
            <person name="Lucas S."/>
            <person name="Copeland A."/>
            <person name="Lapidus A."/>
            <person name="Glavina del Rio T."/>
            <person name="Tice H."/>
            <person name="Bruce D."/>
            <person name="Goodwin L."/>
            <person name="Pitluck S."/>
            <person name="Munk A.C."/>
            <person name="Brettin T."/>
            <person name="Detter J.C."/>
            <person name="Han C."/>
            <person name="Tapia R."/>
            <person name="Larimer F."/>
            <person name="Land M."/>
            <person name="Hauser L."/>
            <person name="Kyrpides N."/>
            <person name="Mikhailova N."/>
            <person name="Balakrishnan V."/>
            <person name="Glasner J."/>
            <person name="Perna N.T."/>
        </authorList>
    </citation>
    <scope>NUCLEOTIDE SEQUENCE [LARGE SCALE GENOMIC DNA]</scope>
    <source>
        <strain>PC1</strain>
    </source>
</reference>
<comment type="function">
    <text evidence="1">Heme chaperone required for the biogenesis of c-type cytochromes. Transiently binds heme delivered by CcmC and transfers the heme to apo-cytochromes in a process facilitated by CcmF and CcmH.</text>
</comment>
<comment type="subcellular location">
    <subcellularLocation>
        <location evidence="1">Cell inner membrane</location>
        <topology evidence="1">Single-pass type II membrane protein</topology>
        <orientation evidence="1">Periplasmic side</orientation>
    </subcellularLocation>
</comment>
<comment type="similarity">
    <text evidence="1">Belongs to the CcmE/CycJ family.</text>
</comment>
<gene>
    <name evidence="1" type="primary">ccmE</name>
    <name evidence="1" type="synonym">cycJ</name>
    <name type="ordered locus">PC1_2420</name>
</gene>
<feature type="chain" id="PRO_1000216215" description="Cytochrome c-type biogenesis protein CcmE">
    <location>
        <begin position="1"/>
        <end position="160"/>
    </location>
</feature>
<feature type="topological domain" description="Cytoplasmic" evidence="1">
    <location>
        <begin position="1"/>
        <end position="8"/>
    </location>
</feature>
<feature type="transmembrane region" description="Helical; Signal-anchor for type II membrane protein" evidence="1">
    <location>
        <begin position="9"/>
        <end position="29"/>
    </location>
</feature>
<feature type="topological domain" description="Periplasmic" evidence="1">
    <location>
        <begin position="30"/>
        <end position="160"/>
    </location>
</feature>
<feature type="binding site" description="covalent" evidence="1">
    <location>
        <position position="130"/>
    </location>
    <ligand>
        <name>heme</name>
        <dbReference type="ChEBI" id="CHEBI:30413"/>
    </ligand>
</feature>
<feature type="binding site" description="axial binding residue" evidence="1">
    <location>
        <position position="134"/>
    </location>
    <ligand>
        <name>heme</name>
        <dbReference type="ChEBI" id="CHEBI:30413"/>
    </ligand>
    <ligandPart>
        <name>Fe</name>
        <dbReference type="ChEBI" id="CHEBI:18248"/>
    </ligandPart>
</feature>
<proteinExistence type="inferred from homology"/>
<keyword id="KW-0997">Cell inner membrane</keyword>
<keyword id="KW-1003">Cell membrane</keyword>
<keyword id="KW-0201">Cytochrome c-type biogenesis</keyword>
<keyword id="KW-0349">Heme</keyword>
<keyword id="KW-0408">Iron</keyword>
<keyword id="KW-0472">Membrane</keyword>
<keyword id="KW-0479">Metal-binding</keyword>
<keyword id="KW-0735">Signal-anchor</keyword>
<keyword id="KW-0812">Transmembrane</keyword>
<keyword id="KW-1133">Transmembrane helix</keyword>
<accession>C6DK68</accession>
<name>CCME_PECCP</name>
<evidence type="ECO:0000255" key="1">
    <source>
        <dbReference type="HAMAP-Rule" id="MF_01959"/>
    </source>
</evidence>
<organism>
    <name type="scientific">Pectobacterium carotovorum subsp. carotovorum (strain PC1)</name>
    <dbReference type="NCBI Taxonomy" id="561230"/>
    <lineage>
        <taxon>Bacteria</taxon>
        <taxon>Pseudomonadati</taxon>
        <taxon>Pseudomonadota</taxon>
        <taxon>Gammaproteobacteria</taxon>
        <taxon>Enterobacterales</taxon>
        <taxon>Pectobacteriaceae</taxon>
        <taxon>Pectobacterium</taxon>
    </lineage>
</organism>
<dbReference type="EMBL" id="CP001657">
    <property type="protein sequence ID" value="ACT13451.1"/>
    <property type="molecule type" value="Genomic_DNA"/>
</dbReference>
<dbReference type="RefSeq" id="WP_015840633.1">
    <property type="nucleotide sequence ID" value="NC_012917.1"/>
</dbReference>
<dbReference type="SMR" id="C6DK68"/>
<dbReference type="STRING" id="561230.PC1_2420"/>
<dbReference type="KEGG" id="pct:PC1_2420"/>
<dbReference type="eggNOG" id="COG2332">
    <property type="taxonomic scope" value="Bacteria"/>
</dbReference>
<dbReference type="HOGENOM" id="CLU_079503_1_0_6"/>
<dbReference type="OrthoDB" id="9793584at2"/>
<dbReference type="Proteomes" id="UP000002736">
    <property type="component" value="Chromosome"/>
</dbReference>
<dbReference type="GO" id="GO:0005886">
    <property type="term" value="C:plasma membrane"/>
    <property type="evidence" value="ECO:0007669"/>
    <property type="project" value="UniProtKB-SubCell"/>
</dbReference>
<dbReference type="GO" id="GO:0020037">
    <property type="term" value="F:heme binding"/>
    <property type="evidence" value="ECO:0007669"/>
    <property type="project" value="InterPro"/>
</dbReference>
<dbReference type="GO" id="GO:0046872">
    <property type="term" value="F:metal ion binding"/>
    <property type="evidence" value="ECO:0007669"/>
    <property type="project" value="UniProtKB-KW"/>
</dbReference>
<dbReference type="GO" id="GO:0017004">
    <property type="term" value="P:cytochrome complex assembly"/>
    <property type="evidence" value="ECO:0007669"/>
    <property type="project" value="UniProtKB-KW"/>
</dbReference>
<dbReference type="FunFam" id="2.40.50.140:FF:000104">
    <property type="entry name" value="Cytochrome c-type biogenesis protein CcmE"/>
    <property type="match status" value="1"/>
</dbReference>
<dbReference type="Gene3D" id="2.40.50.140">
    <property type="entry name" value="Nucleic acid-binding proteins"/>
    <property type="match status" value="1"/>
</dbReference>
<dbReference type="HAMAP" id="MF_01959">
    <property type="entry name" value="CcmE"/>
    <property type="match status" value="1"/>
</dbReference>
<dbReference type="InterPro" id="IPR004329">
    <property type="entry name" value="CcmE"/>
</dbReference>
<dbReference type="InterPro" id="IPR036127">
    <property type="entry name" value="CcmE-like_sf"/>
</dbReference>
<dbReference type="InterPro" id="IPR012340">
    <property type="entry name" value="NA-bd_OB-fold"/>
</dbReference>
<dbReference type="NCBIfam" id="NF009638">
    <property type="entry name" value="PRK13165.1"/>
    <property type="match status" value="1"/>
</dbReference>
<dbReference type="NCBIfam" id="NF009727">
    <property type="entry name" value="PRK13254.1-1"/>
    <property type="match status" value="1"/>
</dbReference>
<dbReference type="NCBIfam" id="NF009729">
    <property type="entry name" value="PRK13254.1-3"/>
    <property type="match status" value="1"/>
</dbReference>
<dbReference type="PANTHER" id="PTHR34128">
    <property type="entry name" value="CYTOCHROME C-TYPE BIOGENESIS PROTEIN CCME HOMOLOG, MITOCHONDRIAL"/>
    <property type="match status" value="1"/>
</dbReference>
<dbReference type="PANTHER" id="PTHR34128:SF2">
    <property type="entry name" value="CYTOCHROME C-TYPE BIOGENESIS PROTEIN CCME HOMOLOG, MITOCHONDRIAL"/>
    <property type="match status" value="1"/>
</dbReference>
<dbReference type="Pfam" id="PF03100">
    <property type="entry name" value="CcmE"/>
    <property type="match status" value="1"/>
</dbReference>
<dbReference type="SUPFAM" id="SSF82093">
    <property type="entry name" value="Heme chaperone CcmE"/>
    <property type="match status" value="1"/>
</dbReference>
<protein>
    <recommendedName>
        <fullName evidence="1">Cytochrome c-type biogenesis protein CcmE</fullName>
    </recommendedName>
    <alternativeName>
        <fullName evidence="1">Cytochrome c maturation protein E</fullName>
    </alternativeName>
    <alternativeName>
        <fullName evidence="1">Heme chaperone CcmE</fullName>
    </alternativeName>
</protein>
<sequence>MSAPRKTRLYAILAVICGAVLTVALTLYALSSNIDLFYTPSEILYGKNETQEKPAIGQRLRVGGMVMPGSVRRDSQSLEVRFTVYDAQGSVEVTYNGMLPDLFREGQGVVAQGILDTDDHIMAKEVLARHDENYTPPEIKAAMEGQHGHAPAAVTEGKRL</sequence>